<proteinExistence type="evidence at protein level"/>
<sequence length="588" mass="67252">MYRWLTKVLGTILRLCERPAPGARALLKRRRSSSSLFSTAVDTDEIPAKRPRLDCFIHQVKNSLYNAASLFGFPFQLTTKPMVSSACNGTRNVAPSGEVFSNSPSCELTTSGSCSSMLKLGNKSPNGISDYPKIRVTVARDQPRRVLPSFGFTLKSEGYNRRPSGRRHSKSNPESSLPWKPQEQGVTEMISEEGGKGARRPHCTVEEGVQKDEREKYLKLLERLKEGAHGSTFPPAVSHHSSQRTQMDTLKTKGWMEEQNHGVRTTHLVPKQYRVVETRGPLCSVRSEKRYSKGKADTEKVVGLRFEKDGTRGHQLEPDLSEEVSARLRLGSGSNGLLRRKISVLEAKEKNFPSKEKDRRTEDLFELTEDMEKEISNALGHGPPDEILSSAFKLRITRGDIQTLKNYHWLNDEVINFYMNLLVERSKKQGYPALHALSTFFYPKLKSGGYQAVKRWTKGVNLFDQELVLVPIHRKVHWSLVVMDLRKKCLKYLDSMGQKGHRICEILLQYLQDESKTKRNTDLNLLEWTHYSMKPHEIPQQLNGSDCGMFTCKYADYISRDKPITFTQHQMPLFRKKMVWEILHQQLL</sequence>
<keyword id="KW-0963">Cytoplasm</keyword>
<keyword id="KW-0378">Hydrolase</keyword>
<keyword id="KW-0472">Membrane</keyword>
<keyword id="KW-0509">mRNA transport</keyword>
<keyword id="KW-0906">Nuclear pore complex</keyword>
<keyword id="KW-0539">Nucleus</keyword>
<keyword id="KW-0597">Phosphoprotein</keyword>
<keyword id="KW-0645">Protease</keyword>
<keyword id="KW-0653">Protein transport</keyword>
<keyword id="KW-1185">Reference proteome</keyword>
<keyword id="KW-0788">Thiol protease</keyword>
<keyword id="KW-0811">Translocation</keyword>
<keyword id="KW-0813">Transport</keyword>
<keyword id="KW-0832">Ubl conjugation</keyword>
<keyword id="KW-0833">Ubl conjugation pathway</keyword>
<keyword id="KW-0879">Wnt signaling pathway</keyword>
<reference key="1">
    <citation type="journal article" date="2000" name="J. Biol. Chem.">
        <title>Inhibition of Wnt signaling pathway by a novel Axin-binding protein.</title>
        <authorList>
            <person name="Kadoya T."/>
            <person name="Kishida S."/>
            <person name="Fukui A."/>
            <person name="Hinoi T."/>
            <person name="Michiue T."/>
            <person name="Asashima M."/>
            <person name="Kikuchi A."/>
        </authorList>
    </citation>
    <scope>NUCLEOTIDE SEQUENCE [MRNA]</scope>
    <scope>FUNCTION</scope>
    <scope>TISSUE SPECIFICITY</scope>
    <source>
        <tissue>Brain</tissue>
    </source>
</reference>
<reference key="2">
    <citation type="journal article" date="2002" name="Mol. Cell. Biol.">
        <title>Desumoylation activity of Axam, a novel Axin-binding protein, is involved in downregulation of beta-catenin.</title>
        <authorList>
            <person name="Kadoya T."/>
            <person name="Yamamoto H."/>
            <person name="Suzuki T."/>
            <person name="Yukita A."/>
            <person name="Fukui A."/>
            <person name="Michiue T."/>
            <person name="Asahara T."/>
            <person name="Tanaka K."/>
            <person name="Asashima M."/>
            <person name="Kikuchi A."/>
        </authorList>
    </citation>
    <scope>FUNCTION</scope>
    <scope>MUTAGENESIS OF CYS-547</scope>
</reference>
<name>SENP2_RAT</name>
<protein>
    <recommendedName>
        <fullName evidence="8">Sentrin-specific protease 2</fullName>
        <ecNumber evidence="2">3.4.22.-</ecNumber>
    </recommendedName>
    <alternativeName>
        <fullName evidence="7">Axin-associating molecule</fullName>
        <shortName evidence="7">Axam</shortName>
    </alternativeName>
    <alternativeName>
        <fullName>Sentrin/SUMO-specific protease SENP2</fullName>
    </alternativeName>
</protein>
<gene>
    <name type="primary">Senp2</name>
</gene>
<comment type="function">
    <text evidence="1 2 5 6">Protease that catalyzes two essential functions in the SUMO pathway (By similarity). The first is the hydrolysis of an alpha-linked peptide bond at the C-terminal end of the small ubiquitin-like modifier (SUMO) propeptides, SUMO1, SUMO2 and SUMO3 leading to the mature form of the proteins (By similarity). The second is the deconjugation of SUMO1, SUMO2 and SUMO3 from targeted proteins, by cleaving an epsilon-linked peptide bond between the C-terminal glycine of the mature SUMO and the lysine epsilon-amino group of the target protein (By similarity). May down-regulate CTNNB1 levels and thereby modulate the Wnt pathway (PubMed:10944533, PubMed:11997515). Deconjugates SUMO2 from MTA1 (By similarity). Plays a dynamic role in adipogenesis by desumoylating and promoting the stabilization of CEBPB (By similarity). Acts as a regulator of the cGAS-STING pathway by catalyzing desumoylation of CGAS and STING1 during the late phase of viral infection (By similarity).</text>
</comment>
<comment type="subunit">
    <text evidence="2 5">Binds to SUMO2 and SUMO3 (By similarity). Interacts with the C-terminal domain of NUP153 via its N-terminus (By similarity). Interacts with MTA1 (By similarity). Binds to AXIN1 (PubMed:10944533).</text>
</comment>
<comment type="subcellular location">
    <subcellularLocation>
        <location evidence="2">Nucleus</location>
        <location evidence="2">Nuclear pore complex</location>
    </subcellularLocation>
    <subcellularLocation>
        <location evidence="2">Nucleus membrane</location>
        <topology evidence="2">Peripheral membrane protein</topology>
        <orientation evidence="2">Nucleoplasmic side</orientation>
    </subcellularLocation>
    <subcellularLocation>
        <location evidence="2">Cytoplasm</location>
    </subcellularLocation>
    <text evidence="2">Shuttles between cytoplasm and nucleus.</text>
</comment>
<comment type="tissue specificity">
    <text evidence="5">Ubiquitous. Highly expressed in brain, lung and testis.</text>
</comment>
<comment type="PTM">
    <text evidence="2">Polyubiquitinated; which leads to proteasomal degradation.</text>
</comment>
<comment type="similarity">
    <text evidence="8">Belongs to the peptidase C48 family.</text>
</comment>
<evidence type="ECO:0000250" key="1">
    <source>
        <dbReference type="UniProtKB" id="Q91ZX6"/>
    </source>
</evidence>
<evidence type="ECO:0000250" key="2">
    <source>
        <dbReference type="UniProtKB" id="Q9HC62"/>
    </source>
</evidence>
<evidence type="ECO:0000255" key="3"/>
<evidence type="ECO:0000256" key="4">
    <source>
        <dbReference type="SAM" id="MobiDB-lite"/>
    </source>
</evidence>
<evidence type="ECO:0000269" key="5">
    <source>
    </source>
</evidence>
<evidence type="ECO:0000269" key="6">
    <source>
    </source>
</evidence>
<evidence type="ECO:0000303" key="7">
    <source>
    </source>
</evidence>
<evidence type="ECO:0000305" key="8"/>
<organism>
    <name type="scientific">Rattus norvegicus</name>
    <name type="common">Rat</name>
    <dbReference type="NCBI Taxonomy" id="10116"/>
    <lineage>
        <taxon>Eukaryota</taxon>
        <taxon>Metazoa</taxon>
        <taxon>Chordata</taxon>
        <taxon>Craniata</taxon>
        <taxon>Vertebrata</taxon>
        <taxon>Euteleostomi</taxon>
        <taxon>Mammalia</taxon>
        <taxon>Eutheria</taxon>
        <taxon>Euarchontoglires</taxon>
        <taxon>Glires</taxon>
        <taxon>Rodentia</taxon>
        <taxon>Myomorpha</taxon>
        <taxon>Muroidea</taxon>
        <taxon>Muridae</taxon>
        <taxon>Murinae</taxon>
        <taxon>Rattus</taxon>
    </lineage>
</organism>
<feature type="chain" id="PRO_0000101720" description="Sentrin-specific protease 2">
    <location>
        <begin position="1"/>
        <end position="588"/>
    </location>
</feature>
<feature type="region of interest" description="Axin-binding" evidence="5">
    <location>
        <begin position="72"/>
        <end position="381"/>
    </location>
</feature>
<feature type="region of interest" description="Disordered" evidence="4">
    <location>
        <begin position="157"/>
        <end position="184"/>
    </location>
</feature>
<feature type="region of interest" description="Protease" evidence="2">
    <location>
        <begin position="394"/>
        <end position="558"/>
    </location>
</feature>
<feature type="short sequence motif" description="Nuclear localization signal" evidence="3">
    <location>
        <begin position="28"/>
        <end position="31"/>
    </location>
</feature>
<feature type="short sequence motif" description="Nuclear localization signal" evidence="3">
    <location>
        <begin position="47"/>
        <end position="52"/>
    </location>
</feature>
<feature type="short sequence motif" description="Nuclear export signal" evidence="2">
    <location>
        <begin position="316"/>
        <end position="331"/>
    </location>
</feature>
<feature type="active site" evidence="2">
    <location>
        <position position="477"/>
    </location>
</feature>
<feature type="active site" evidence="2">
    <location>
        <position position="494"/>
    </location>
</feature>
<feature type="active site" description="Nucleophile" evidence="2">
    <location>
        <position position="547"/>
    </location>
</feature>
<feature type="modified residue" description="Phosphoserine" evidence="2">
    <location>
        <position position="32"/>
    </location>
</feature>
<feature type="modified residue" description="Phosphoserine" evidence="2">
    <location>
        <position position="332"/>
    </location>
</feature>
<feature type="modified residue" description="Phosphoserine" evidence="2">
    <location>
        <position position="343"/>
    </location>
</feature>
<feature type="mutagenesis site" description="Abolishes protease activity." evidence="6">
    <original>C</original>
    <variation>S</variation>
    <location>
        <position position="547"/>
    </location>
</feature>
<accession>Q9EQE1</accession>
<dbReference type="EC" id="3.4.22.-" evidence="2"/>
<dbReference type="EMBL" id="AF260129">
    <property type="protein sequence ID" value="AAG34653.1"/>
    <property type="molecule type" value="mRNA"/>
</dbReference>
<dbReference type="RefSeq" id="NP_076479.1">
    <property type="nucleotide sequence ID" value="NM_023989.1"/>
</dbReference>
<dbReference type="SMR" id="Q9EQE1"/>
<dbReference type="BioGRID" id="249380">
    <property type="interactions" value="2"/>
</dbReference>
<dbReference type="FunCoup" id="Q9EQE1">
    <property type="interactions" value="2705"/>
</dbReference>
<dbReference type="STRING" id="10116.ENSRNOP00000002425"/>
<dbReference type="MEROPS" id="C48.007"/>
<dbReference type="iPTMnet" id="Q9EQE1"/>
<dbReference type="PhosphoSitePlus" id="Q9EQE1"/>
<dbReference type="PaxDb" id="10116-ENSRNOP00000002425"/>
<dbReference type="GeneID" id="78973"/>
<dbReference type="KEGG" id="rno:78973"/>
<dbReference type="UCSC" id="RGD:708378">
    <property type="organism name" value="rat"/>
</dbReference>
<dbReference type="AGR" id="RGD:708378"/>
<dbReference type="CTD" id="59343"/>
<dbReference type="RGD" id="708378">
    <property type="gene designation" value="Senp2"/>
</dbReference>
<dbReference type="VEuPathDB" id="HostDB:ENSRNOG00000001773"/>
<dbReference type="eggNOG" id="KOG0778">
    <property type="taxonomic scope" value="Eukaryota"/>
</dbReference>
<dbReference type="HOGENOM" id="CLU_024324_4_0_1"/>
<dbReference type="InParanoid" id="Q9EQE1"/>
<dbReference type="OrthoDB" id="1939479at2759"/>
<dbReference type="PhylomeDB" id="Q9EQE1"/>
<dbReference type="TreeFam" id="TF316289"/>
<dbReference type="Reactome" id="R-RNO-3065679">
    <property type="pathway name" value="SUMO is proteolytically processed"/>
</dbReference>
<dbReference type="PRO" id="PR:Q9EQE1"/>
<dbReference type="Proteomes" id="UP000002494">
    <property type="component" value="Chromosome 11"/>
</dbReference>
<dbReference type="Bgee" id="ENSRNOG00000001773">
    <property type="expression patterns" value="Expressed in brain and 19 other cell types or tissues"/>
</dbReference>
<dbReference type="ExpressionAtlas" id="Q9EQE1">
    <property type="expression patterns" value="baseline and differential"/>
</dbReference>
<dbReference type="GO" id="GO:0005737">
    <property type="term" value="C:cytoplasm"/>
    <property type="evidence" value="ECO:0007669"/>
    <property type="project" value="UniProtKB-SubCell"/>
</dbReference>
<dbReference type="GO" id="GO:0016604">
    <property type="term" value="C:nuclear body"/>
    <property type="evidence" value="ECO:0000266"/>
    <property type="project" value="RGD"/>
</dbReference>
<dbReference type="GO" id="GO:0031965">
    <property type="term" value="C:nuclear membrane"/>
    <property type="evidence" value="ECO:0007669"/>
    <property type="project" value="UniProtKB-SubCell"/>
</dbReference>
<dbReference type="GO" id="GO:0005643">
    <property type="term" value="C:nuclear pore"/>
    <property type="evidence" value="ECO:0000250"/>
    <property type="project" value="UniProtKB"/>
</dbReference>
<dbReference type="GO" id="GO:0005634">
    <property type="term" value="C:nucleus"/>
    <property type="evidence" value="ECO:0000318"/>
    <property type="project" value="GO_Central"/>
</dbReference>
<dbReference type="GO" id="GO:0016605">
    <property type="term" value="C:PML body"/>
    <property type="evidence" value="ECO:0000266"/>
    <property type="project" value="RGD"/>
</dbReference>
<dbReference type="GO" id="GO:0016929">
    <property type="term" value="F:deSUMOylase activity"/>
    <property type="evidence" value="ECO:0000250"/>
    <property type="project" value="UniProtKB"/>
</dbReference>
<dbReference type="GO" id="GO:0019904">
    <property type="term" value="F:protein domain specific binding"/>
    <property type="evidence" value="ECO:0000353"/>
    <property type="project" value="RGD"/>
</dbReference>
<dbReference type="GO" id="GO:0070139">
    <property type="term" value="F:SUMO-specific endopeptidase activity"/>
    <property type="evidence" value="ECO:0000250"/>
    <property type="project" value="UniProtKB"/>
</dbReference>
<dbReference type="GO" id="GO:0009950">
    <property type="term" value="P:dorsal/ventral axis specification"/>
    <property type="evidence" value="ECO:0000314"/>
    <property type="project" value="RGD"/>
</dbReference>
<dbReference type="GO" id="GO:0045444">
    <property type="term" value="P:fat cell differentiation"/>
    <property type="evidence" value="ECO:0000250"/>
    <property type="project" value="UniProtKB"/>
</dbReference>
<dbReference type="GO" id="GO:0007507">
    <property type="term" value="P:heart development"/>
    <property type="evidence" value="ECO:0000266"/>
    <property type="project" value="RGD"/>
</dbReference>
<dbReference type="GO" id="GO:0060711">
    <property type="term" value="P:labyrinthine layer development"/>
    <property type="evidence" value="ECO:0000266"/>
    <property type="project" value="RGD"/>
</dbReference>
<dbReference type="GO" id="GO:0051028">
    <property type="term" value="P:mRNA transport"/>
    <property type="evidence" value="ECO:0007669"/>
    <property type="project" value="UniProtKB-KW"/>
</dbReference>
<dbReference type="GO" id="GO:0031397">
    <property type="term" value="P:negative regulation of protein ubiquitination"/>
    <property type="evidence" value="ECO:0000266"/>
    <property type="project" value="RGD"/>
</dbReference>
<dbReference type="GO" id="GO:0031398">
    <property type="term" value="P:positive regulation of protein ubiquitination"/>
    <property type="evidence" value="ECO:0000266"/>
    <property type="project" value="RGD"/>
</dbReference>
<dbReference type="GO" id="GO:0045944">
    <property type="term" value="P:positive regulation of transcription by RNA polymerase II"/>
    <property type="evidence" value="ECO:0000266"/>
    <property type="project" value="RGD"/>
</dbReference>
<dbReference type="GO" id="GO:0031648">
    <property type="term" value="P:protein destabilization"/>
    <property type="evidence" value="ECO:0000266"/>
    <property type="project" value="RGD"/>
</dbReference>
<dbReference type="GO" id="GO:0016926">
    <property type="term" value="P:protein desumoylation"/>
    <property type="evidence" value="ECO:0000250"/>
    <property type="project" value="UniProtKB"/>
</dbReference>
<dbReference type="GO" id="GO:0015031">
    <property type="term" value="P:protein transport"/>
    <property type="evidence" value="ECO:0007669"/>
    <property type="project" value="UniProtKB-KW"/>
</dbReference>
<dbReference type="GO" id="GO:0006508">
    <property type="term" value="P:proteolysis"/>
    <property type="evidence" value="ECO:0007669"/>
    <property type="project" value="UniProtKB-KW"/>
</dbReference>
<dbReference type="GO" id="GO:0032875">
    <property type="term" value="P:regulation of DNA endoreduplication"/>
    <property type="evidence" value="ECO:0000266"/>
    <property type="project" value="RGD"/>
</dbReference>
<dbReference type="GO" id="GO:2000045">
    <property type="term" value="P:regulation of G1/S transition of mitotic cell cycle"/>
    <property type="evidence" value="ECO:0000266"/>
    <property type="project" value="RGD"/>
</dbReference>
<dbReference type="GO" id="GO:0051246">
    <property type="term" value="P:regulation of protein metabolic process"/>
    <property type="evidence" value="ECO:0000314"/>
    <property type="project" value="RGD"/>
</dbReference>
<dbReference type="GO" id="GO:0060712">
    <property type="term" value="P:spongiotrophoblast layer development"/>
    <property type="evidence" value="ECO:0000266"/>
    <property type="project" value="RGD"/>
</dbReference>
<dbReference type="GO" id="GO:0060707">
    <property type="term" value="P:trophoblast giant cell differentiation"/>
    <property type="evidence" value="ECO:0000266"/>
    <property type="project" value="RGD"/>
</dbReference>
<dbReference type="GO" id="GO:0016055">
    <property type="term" value="P:Wnt signaling pathway"/>
    <property type="evidence" value="ECO:0007669"/>
    <property type="project" value="UniProtKB-KW"/>
</dbReference>
<dbReference type="FunFam" id="3.40.395.10:FF:000001">
    <property type="entry name" value="Sentrin-specific protease 1"/>
    <property type="match status" value="1"/>
</dbReference>
<dbReference type="Gene3D" id="3.40.395.10">
    <property type="entry name" value="Adenoviral Proteinase, Chain A"/>
    <property type="match status" value="1"/>
</dbReference>
<dbReference type="InterPro" id="IPR038765">
    <property type="entry name" value="Papain-like_cys_pep_sf"/>
</dbReference>
<dbReference type="InterPro" id="IPR003653">
    <property type="entry name" value="Peptidase_C48_C"/>
</dbReference>
<dbReference type="PANTHER" id="PTHR12606:SF11">
    <property type="entry name" value="SENTRIN-SPECIFIC PROTEASE 2"/>
    <property type="match status" value="1"/>
</dbReference>
<dbReference type="PANTHER" id="PTHR12606">
    <property type="entry name" value="SENTRIN/SUMO-SPECIFIC PROTEASE"/>
    <property type="match status" value="1"/>
</dbReference>
<dbReference type="Pfam" id="PF02902">
    <property type="entry name" value="Peptidase_C48"/>
    <property type="match status" value="1"/>
</dbReference>
<dbReference type="SUPFAM" id="SSF54001">
    <property type="entry name" value="Cysteine proteinases"/>
    <property type="match status" value="1"/>
</dbReference>
<dbReference type="PROSITE" id="PS50600">
    <property type="entry name" value="ULP_PROTEASE"/>
    <property type="match status" value="1"/>
</dbReference>